<proteinExistence type="inferred from homology"/>
<dbReference type="EC" id="4.4.1.21" evidence="1"/>
<dbReference type="EMBL" id="CP000046">
    <property type="protein sequence ID" value="AAW38436.1"/>
    <property type="molecule type" value="Genomic_DNA"/>
</dbReference>
<dbReference type="RefSeq" id="WP_000164421.1">
    <property type="nucleotide sequence ID" value="NZ_JBGOFO010000007.1"/>
</dbReference>
<dbReference type="SMR" id="Q5HE66"/>
<dbReference type="KEGG" id="sac:SACOL2126"/>
<dbReference type="HOGENOM" id="CLU_107531_2_0_9"/>
<dbReference type="Proteomes" id="UP000000530">
    <property type="component" value="Chromosome"/>
</dbReference>
<dbReference type="GO" id="GO:0005506">
    <property type="term" value="F:iron ion binding"/>
    <property type="evidence" value="ECO:0007669"/>
    <property type="project" value="InterPro"/>
</dbReference>
<dbReference type="GO" id="GO:0043768">
    <property type="term" value="F:S-ribosylhomocysteine lyase activity"/>
    <property type="evidence" value="ECO:0007669"/>
    <property type="project" value="UniProtKB-UniRule"/>
</dbReference>
<dbReference type="GO" id="GO:0009372">
    <property type="term" value="P:quorum sensing"/>
    <property type="evidence" value="ECO:0007669"/>
    <property type="project" value="UniProtKB-UniRule"/>
</dbReference>
<dbReference type="Gene3D" id="3.30.1360.80">
    <property type="entry name" value="S-ribosylhomocysteinase (LuxS)"/>
    <property type="match status" value="1"/>
</dbReference>
<dbReference type="HAMAP" id="MF_00091">
    <property type="entry name" value="LuxS"/>
    <property type="match status" value="1"/>
</dbReference>
<dbReference type="InterPro" id="IPR037005">
    <property type="entry name" value="LuxS_sf"/>
</dbReference>
<dbReference type="InterPro" id="IPR011249">
    <property type="entry name" value="Metalloenz_LuxS/M16"/>
</dbReference>
<dbReference type="InterPro" id="IPR003815">
    <property type="entry name" value="S-ribosylhomocysteinase"/>
</dbReference>
<dbReference type="NCBIfam" id="NF002604">
    <property type="entry name" value="PRK02260.1-4"/>
    <property type="match status" value="1"/>
</dbReference>
<dbReference type="PANTHER" id="PTHR35799">
    <property type="entry name" value="S-RIBOSYLHOMOCYSTEINE LYASE"/>
    <property type="match status" value="1"/>
</dbReference>
<dbReference type="PANTHER" id="PTHR35799:SF1">
    <property type="entry name" value="S-RIBOSYLHOMOCYSTEINE LYASE"/>
    <property type="match status" value="1"/>
</dbReference>
<dbReference type="Pfam" id="PF02664">
    <property type="entry name" value="LuxS"/>
    <property type="match status" value="1"/>
</dbReference>
<dbReference type="PIRSF" id="PIRSF006160">
    <property type="entry name" value="AI2"/>
    <property type="match status" value="1"/>
</dbReference>
<dbReference type="PRINTS" id="PR01487">
    <property type="entry name" value="LUXSPROTEIN"/>
</dbReference>
<dbReference type="SUPFAM" id="SSF63411">
    <property type="entry name" value="LuxS/MPP-like metallohydrolase"/>
    <property type="match status" value="1"/>
</dbReference>
<evidence type="ECO:0000255" key="1">
    <source>
        <dbReference type="HAMAP-Rule" id="MF_00091"/>
    </source>
</evidence>
<name>LUXS_STAAC</name>
<sequence>MTKMNVESFNLDHTKVVAPFIRLAGTMEGLNGDVIHKYDIRFKQPNKEHMDMPGLHSLEHLMAENIRNHSDKVVDLSPMGCQTGFYVSFINHDNYDDVLNIVEATLNDVLNATEVPACNEVQCGWAASHSLEGAKTIAQAFLDKRNEWHDVFGTGK</sequence>
<organism>
    <name type="scientific">Staphylococcus aureus (strain COL)</name>
    <dbReference type="NCBI Taxonomy" id="93062"/>
    <lineage>
        <taxon>Bacteria</taxon>
        <taxon>Bacillati</taxon>
        <taxon>Bacillota</taxon>
        <taxon>Bacilli</taxon>
        <taxon>Bacillales</taxon>
        <taxon>Staphylococcaceae</taxon>
        <taxon>Staphylococcus</taxon>
    </lineage>
</organism>
<feature type="chain" id="PRO_0000172253" description="S-ribosylhomocysteine lyase">
    <location>
        <begin position="1"/>
        <end position="156"/>
    </location>
</feature>
<feature type="binding site" evidence="1">
    <location>
        <position position="56"/>
    </location>
    <ligand>
        <name>Fe cation</name>
        <dbReference type="ChEBI" id="CHEBI:24875"/>
    </ligand>
</feature>
<feature type="binding site" evidence="1">
    <location>
        <position position="60"/>
    </location>
    <ligand>
        <name>Fe cation</name>
        <dbReference type="ChEBI" id="CHEBI:24875"/>
    </ligand>
</feature>
<feature type="binding site" evidence="1">
    <location>
        <position position="123"/>
    </location>
    <ligand>
        <name>Fe cation</name>
        <dbReference type="ChEBI" id="CHEBI:24875"/>
    </ligand>
</feature>
<keyword id="KW-0071">Autoinducer synthesis</keyword>
<keyword id="KW-0408">Iron</keyword>
<keyword id="KW-0456">Lyase</keyword>
<keyword id="KW-0479">Metal-binding</keyword>
<keyword id="KW-0673">Quorum sensing</keyword>
<comment type="function">
    <text evidence="1">Involved in the synthesis of autoinducer 2 (AI-2) which is secreted by bacteria and is used to communicate both the cell density and the metabolic potential of the environment. The regulation of gene expression in response to changes in cell density is called quorum sensing. Catalyzes the transformation of S-ribosylhomocysteine (RHC) to homocysteine (HC) and 4,5-dihydroxy-2,3-pentadione (DPD).</text>
</comment>
<comment type="catalytic activity">
    <reaction evidence="1">
        <text>S-(5-deoxy-D-ribos-5-yl)-L-homocysteine = (S)-4,5-dihydroxypentane-2,3-dione + L-homocysteine</text>
        <dbReference type="Rhea" id="RHEA:17753"/>
        <dbReference type="ChEBI" id="CHEBI:29484"/>
        <dbReference type="ChEBI" id="CHEBI:58195"/>
        <dbReference type="ChEBI" id="CHEBI:58199"/>
        <dbReference type="EC" id="4.4.1.21"/>
    </reaction>
</comment>
<comment type="cofactor">
    <cofactor evidence="1">
        <name>Fe cation</name>
        <dbReference type="ChEBI" id="CHEBI:24875"/>
    </cofactor>
    <text evidence="1">Binds 1 Fe cation per subunit.</text>
</comment>
<comment type="subunit">
    <text evidence="1">Homodimer.</text>
</comment>
<comment type="similarity">
    <text evidence="1">Belongs to the LuxS family.</text>
</comment>
<protein>
    <recommendedName>
        <fullName evidence="1">S-ribosylhomocysteine lyase</fullName>
        <ecNumber evidence="1">4.4.1.21</ecNumber>
    </recommendedName>
    <alternativeName>
        <fullName evidence="1">AI-2 synthesis protein</fullName>
    </alternativeName>
    <alternativeName>
        <fullName evidence="1">Autoinducer-2 production protein LuxS</fullName>
    </alternativeName>
</protein>
<reference key="1">
    <citation type="journal article" date="2005" name="J. Bacteriol.">
        <title>Insights on evolution of virulence and resistance from the complete genome analysis of an early methicillin-resistant Staphylococcus aureus strain and a biofilm-producing methicillin-resistant Staphylococcus epidermidis strain.</title>
        <authorList>
            <person name="Gill S.R."/>
            <person name="Fouts D.E."/>
            <person name="Archer G.L."/>
            <person name="Mongodin E.F."/>
            <person name="DeBoy R.T."/>
            <person name="Ravel J."/>
            <person name="Paulsen I.T."/>
            <person name="Kolonay J.F."/>
            <person name="Brinkac L.M."/>
            <person name="Beanan M.J."/>
            <person name="Dodson R.J."/>
            <person name="Daugherty S.C."/>
            <person name="Madupu R."/>
            <person name="Angiuoli S.V."/>
            <person name="Durkin A.S."/>
            <person name="Haft D.H."/>
            <person name="Vamathevan J.J."/>
            <person name="Khouri H."/>
            <person name="Utterback T.R."/>
            <person name="Lee C."/>
            <person name="Dimitrov G."/>
            <person name="Jiang L."/>
            <person name="Qin H."/>
            <person name="Weidman J."/>
            <person name="Tran K."/>
            <person name="Kang K.H."/>
            <person name="Hance I.R."/>
            <person name="Nelson K.E."/>
            <person name="Fraser C.M."/>
        </authorList>
    </citation>
    <scope>NUCLEOTIDE SEQUENCE [LARGE SCALE GENOMIC DNA]</scope>
    <source>
        <strain>COL</strain>
    </source>
</reference>
<accession>Q5HE66</accession>
<gene>
    <name evidence="1" type="primary">luxS</name>
    <name type="ordered locus">SACOL2126</name>
</gene>